<evidence type="ECO:0000250" key="1"/>
<evidence type="ECO:0000255" key="2"/>
<evidence type="ECO:0000255" key="3">
    <source>
        <dbReference type="PROSITE-ProRule" id="PRU00159"/>
    </source>
</evidence>
<evidence type="ECO:0000255" key="4">
    <source>
        <dbReference type="PROSITE-ProRule" id="PRU00184"/>
    </source>
</evidence>
<evidence type="ECO:0000255" key="5">
    <source>
        <dbReference type="PROSITE-ProRule" id="PRU00316"/>
    </source>
</evidence>
<evidence type="ECO:0000255" key="6">
    <source>
        <dbReference type="PROSITE-ProRule" id="PRU00883"/>
    </source>
</evidence>
<evidence type="ECO:0000255" key="7">
    <source>
        <dbReference type="PROSITE-ProRule" id="PRU10028"/>
    </source>
</evidence>
<evidence type="ECO:0000269" key="8">
    <source>
    </source>
</evidence>
<evidence type="ECO:0000269" key="9">
    <source>
    </source>
</evidence>
<evidence type="ECO:0000269" key="10">
    <source>
    </source>
</evidence>
<evidence type="ECO:0000269" key="11">
    <source>
    </source>
</evidence>
<evidence type="ECO:0000303" key="12">
    <source>
    </source>
</evidence>
<evidence type="ECO:0000303" key="13">
    <source>
    </source>
</evidence>
<evidence type="ECO:0000303" key="14">
    <source ref="3"/>
</evidence>
<evidence type="ECO:0000305" key="15"/>
<evidence type="ECO:0007829" key="16">
    <source>
        <dbReference type="PDB" id="2REI"/>
    </source>
</evidence>
<evidence type="ECO:0007829" key="17">
    <source>
        <dbReference type="PDB" id="3DKO"/>
    </source>
</evidence>
<evidence type="ECO:0007829" key="18">
    <source>
        <dbReference type="PDB" id="3H8M"/>
    </source>
</evidence>
<evidence type="ECO:0007829" key="19">
    <source>
        <dbReference type="PDB" id="3NRU"/>
    </source>
</evidence>
<protein>
    <recommendedName>
        <fullName>Ephrin type-A receptor 7</fullName>
        <ecNumber>2.7.10.1</ecNumber>
    </recommendedName>
    <alternativeName>
        <fullName>EPH homology kinase 3</fullName>
        <shortName>EHK-3</shortName>
    </alternativeName>
    <alternativeName>
        <fullName>EPH-like kinase 11</fullName>
        <shortName>EK11</shortName>
        <shortName>hEK11</shortName>
    </alternativeName>
</protein>
<feature type="signal peptide" evidence="2">
    <location>
        <begin position="1"/>
        <end position="27"/>
    </location>
</feature>
<feature type="chain" id="PRO_0000016818" description="Ephrin type-A receptor 7">
    <location>
        <begin position="28"/>
        <end position="998"/>
    </location>
</feature>
<feature type="topological domain" description="Extracellular" evidence="2">
    <location>
        <begin position="28"/>
        <end position="555"/>
    </location>
</feature>
<feature type="transmembrane region" description="Helical" evidence="2">
    <location>
        <begin position="556"/>
        <end position="576"/>
    </location>
</feature>
<feature type="topological domain" description="Cytoplasmic" evidence="2">
    <location>
        <begin position="577"/>
        <end position="998"/>
    </location>
</feature>
<feature type="domain" description="Eph LBD" evidence="6">
    <location>
        <begin position="32"/>
        <end position="210"/>
    </location>
</feature>
<feature type="domain" description="Fibronectin type-III 1" evidence="5">
    <location>
        <begin position="331"/>
        <end position="441"/>
    </location>
</feature>
<feature type="domain" description="Fibronectin type-III 2" evidence="5">
    <location>
        <begin position="442"/>
        <end position="537"/>
    </location>
</feature>
<feature type="domain" description="Protein kinase" evidence="3">
    <location>
        <begin position="633"/>
        <end position="894"/>
    </location>
</feature>
<feature type="domain" description="SAM" evidence="4">
    <location>
        <begin position="923"/>
        <end position="987"/>
    </location>
</feature>
<feature type="short sequence motif" description="PDZ-binding" evidence="2">
    <location>
        <begin position="996"/>
        <end position="998"/>
    </location>
</feature>
<feature type="active site" description="Proton acceptor" evidence="3 7">
    <location>
        <position position="758"/>
    </location>
</feature>
<feature type="binding site" evidence="3">
    <location>
        <begin position="639"/>
        <end position="647"/>
    </location>
    <ligand>
        <name>ATP</name>
        <dbReference type="ChEBI" id="CHEBI:30616"/>
    </ligand>
</feature>
<feature type="binding site" evidence="3">
    <location>
        <position position="665"/>
    </location>
    <ligand>
        <name>ATP</name>
        <dbReference type="ChEBI" id="CHEBI:30616"/>
    </ligand>
</feature>
<feature type="modified residue" description="Phosphotyrosine; by autocatalysis" evidence="2">
    <location>
        <position position="608"/>
    </location>
</feature>
<feature type="modified residue" description="Phosphotyrosine; by autocatalysis" evidence="2">
    <location>
        <position position="614"/>
    </location>
</feature>
<feature type="modified residue" description="Phosphotyrosine; by autocatalysis" evidence="2">
    <location>
        <position position="791"/>
    </location>
</feature>
<feature type="modified residue" description="Phosphotyrosine; by autocatalysis" evidence="2">
    <location>
        <position position="940"/>
    </location>
</feature>
<feature type="glycosylation site" description="N-linked (GlcNAc...) asparagine" evidence="2">
    <location>
        <position position="343"/>
    </location>
</feature>
<feature type="glycosylation site" description="N-linked (GlcNAc...) asparagine" evidence="2">
    <location>
        <position position="410"/>
    </location>
</feature>
<feature type="splice variant" id="VSP_014380" description="In isoform 3." evidence="13">
    <original>PC</original>
    <variation>RK</variation>
    <location>
        <begin position="278"/>
        <end position="279"/>
    </location>
</feature>
<feature type="splice variant" id="VSP_014381" description="In isoform 3." evidence="13">
    <location>
        <begin position="280"/>
        <end position="998"/>
    </location>
</feature>
<feature type="splice variant" id="VSP_041943" description="In isoform 5." evidence="15">
    <original>APSQVSGVM</original>
    <variation>GMFCVYLH</variation>
    <location>
        <begin position="442"/>
        <end position="450"/>
    </location>
</feature>
<feature type="splice variant" id="VSP_041944" description="In isoform 5." evidence="15">
    <location>
        <begin position="451"/>
        <end position="998"/>
    </location>
</feature>
<feature type="splice variant" id="VSP_014382" description="In isoform 2." evidence="12 13 14">
    <location>
        <begin position="540"/>
        <end position="544"/>
    </location>
</feature>
<feature type="splice variant" id="VSP_041945" description="In isoform 4." evidence="13">
    <original>FKFPG</original>
    <variation>C</variation>
    <location>
        <begin position="600"/>
        <end position="604"/>
    </location>
</feature>
<feature type="sequence variant" id="VAR_022105" description="In dbSNP:rs2278107." evidence="8 10">
    <original>I</original>
    <variation>V</variation>
    <location>
        <position position="138"/>
    </location>
</feature>
<feature type="sequence variant" id="VAR_042150" description="In a colorectal adenocarcinoma sample; somatic mutation." evidence="10">
    <original>E</original>
    <variation>K</variation>
    <location>
        <position position="170"/>
    </location>
</feature>
<feature type="sequence variant" id="VAR_042151" description="In a metastatic melanoma sample; somatic mutation; dbSNP:rs2127994473." evidence="10">
    <original>G</original>
    <variation>R</variation>
    <location>
        <position position="232"/>
    </location>
</feature>
<feature type="sequence variant" id="VAR_022106" description="In dbSNP:rs2278106." evidence="10">
    <original>P</original>
    <variation>S</variation>
    <location>
        <position position="278"/>
    </location>
</feature>
<feature type="sequence variant" id="VAR_036090" description="In a colorectal cancer sample; somatic mutation; dbSNP:rs371089003." evidence="9">
    <original>R</original>
    <variation>W</variation>
    <location>
        <position position="371"/>
    </location>
</feature>
<feature type="sequence variant" id="VAR_042152" description="In a metastatic melanoma sample; somatic mutation; dbSNP:rs2127846874." evidence="10">
    <original>P</original>
    <variation>S</variation>
    <location>
        <position position="903"/>
    </location>
</feature>
<feature type="strand" evidence="19">
    <location>
        <begin position="33"/>
        <end position="37"/>
    </location>
</feature>
<feature type="strand" evidence="19">
    <location>
        <begin position="48"/>
        <end position="51"/>
    </location>
</feature>
<feature type="strand" evidence="19">
    <location>
        <begin position="54"/>
        <end position="61"/>
    </location>
</feature>
<feature type="strand" evidence="19">
    <location>
        <begin position="67"/>
        <end position="74"/>
    </location>
</feature>
<feature type="strand" evidence="19">
    <location>
        <begin position="78"/>
        <end position="80"/>
    </location>
</feature>
<feature type="strand" evidence="19">
    <location>
        <begin position="83"/>
        <end position="86"/>
    </location>
</feature>
<feature type="strand" evidence="19">
    <location>
        <begin position="96"/>
        <end position="106"/>
    </location>
</feature>
<feature type="turn" evidence="19">
    <location>
        <begin position="109"/>
        <end position="111"/>
    </location>
</feature>
<feature type="strand" evidence="19">
    <location>
        <begin position="121"/>
        <end position="132"/>
    </location>
</feature>
<feature type="helix" evidence="19">
    <location>
        <begin position="140"/>
        <end position="142"/>
    </location>
</feature>
<feature type="strand" evidence="19">
    <location>
        <begin position="144"/>
        <end position="150"/>
    </location>
</feature>
<feature type="strand" evidence="19">
    <location>
        <begin position="168"/>
        <end position="174"/>
    </location>
</feature>
<feature type="strand" evidence="19">
    <location>
        <begin position="178"/>
        <end position="190"/>
    </location>
</feature>
<feature type="strand" evidence="19">
    <location>
        <begin position="192"/>
        <end position="202"/>
    </location>
</feature>
<feature type="helix" evidence="16">
    <location>
        <begin position="611"/>
        <end position="613"/>
    </location>
</feature>
<feature type="strand" evidence="16">
    <location>
        <begin position="614"/>
        <end position="616"/>
    </location>
</feature>
<feature type="helix" evidence="16">
    <location>
        <begin position="617"/>
        <end position="624"/>
    </location>
</feature>
<feature type="helix" evidence="16">
    <location>
        <begin position="630"/>
        <end position="632"/>
    </location>
</feature>
<feature type="strand" evidence="16">
    <location>
        <begin position="633"/>
        <end position="641"/>
    </location>
</feature>
<feature type="strand" evidence="16">
    <location>
        <begin position="643"/>
        <end position="652"/>
    </location>
</feature>
<feature type="strand" evidence="17">
    <location>
        <begin position="655"/>
        <end position="657"/>
    </location>
</feature>
<feature type="strand" evidence="16">
    <location>
        <begin position="660"/>
        <end position="666"/>
    </location>
</feature>
<feature type="helix" evidence="16">
    <location>
        <begin position="673"/>
        <end position="686"/>
    </location>
</feature>
<feature type="strand" evidence="16">
    <location>
        <begin position="697"/>
        <end position="701"/>
    </location>
</feature>
<feature type="strand" evidence="16">
    <location>
        <begin position="703"/>
        <end position="705"/>
    </location>
</feature>
<feature type="strand" evidence="16">
    <location>
        <begin position="708"/>
        <end position="712"/>
    </location>
</feature>
<feature type="helix" evidence="16">
    <location>
        <begin position="719"/>
        <end position="725"/>
    </location>
</feature>
<feature type="turn" evidence="16">
    <location>
        <begin position="726"/>
        <end position="728"/>
    </location>
</feature>
<feature type="helix" evidence="16">
    <location>
        <begin position="732"/>
        <end position="751"/>
    </location>
</feature>
<feature type="helix" evidence="16">
    <location>
        <begin position="761"/>
        <end position="763"/>
    </location>
</feature>
<feature type="strand" evidence="16">
    <location>
        <begin position="764"/>
        <end position="766"/>
    </location>
</feature>
<feature type="strand" evidence="16">
    <location>
        <begin position="772"/>
        <end position="774"/>
    </location>
</feature>
<feature type="helix" evidence="16">
    <location>
        <begin position="800"/>
        <end position="802"/>
    </location>
</feature>
<feature type="helix" evidence="16">
    <location>
        <begin position="805"/>
        <end position="810"/>
    </location>
</feature>
<feature type="helix" evidence="16">
    <location>
        <begin position="815"/>
        <end position="830"/>
    </location>
</feature>
<feature type="turn" evidence="16">
    <location>
        <begin position="836"/>
        <end position="839"/>
    </location>
</feature>
<feature type="helix" evidence="16">
    <location>
        <begin position="842"/>
        <end position="850"/>
    </location>
</feature>
<feature type="helix" evidence="16">
    <location>
        <begin position="863"/>
        <end position="872"/>
    </location>
</feature>
<feature type="helix" evidence="16">
    <location>
        <begin position="877"/>
        <end position="879"/>
    </location>
</feature>
<feature type="helix" evidence="16">
    <location>
        <begin position="883"/>
        <end position="895"/>
    </location>
</feature>
<feature type="helix" evidence="16">
    <location>
        <begin position="897"/>
        <end position="899"/>
    </location>
</feature>
<feature type="helix" evidence="18">
    <location>
        <begin position="928"/>
        <end position="934"/>
    </location>
</feature>
<feature type="helix" evidence="18">
    <location>
        <begin position="938"/>
        <end position="940"/>
    </location>
</feature>
<feature type="helix" evidence="18">
    <location>
        <begin position="941"/>
        <end position="946"/>
    </location>
</feature>
<feature type="helix" evidence="18">
    <location>
        <begin position="952"/>
        <end position="956"/>
    </location>
</feature>
<feature type="helix" evidence="18">
    <location>
        <begin position="960"/>
        <end position="965"/>
    </location>
</feature>
<feature type="helix" evidence="18">
    <location>
        <begin position="971"/>
        <end position="988"/>
    </location>
</feature>
<feature type="sequence conflict" description="In Ref. 6; AAH27940." evidence="15" ref="6">
    <original>R</original>
    <variation>C</variation>
    <location sequence="Q15375-3">
        <position position="278"/>
    </location>
</feature>
<name>EPHA7_HUMAN</name>
<dbReference type="EC" id="2.7.10.1"/>
<dbReference type="EMBL" id="L36642">
    <property type="protein sequence ID" value="AAA74243.1"/>
    <property type="molecule type" value="mRNA"/>
</dbReference>
<dbReference type="EMBL" id="AK313529">
    <property type="protein sequence ID" value="BAG36308.1"/>
    <property type="molecule type" value="mRNA"/>
</dbReference>
<dbReference type="EMBL" id="AB209269">
    <property type="protein sequence ID" value="BAD92506.1"/>
    <property type="status" value="ALT_INIT"/>
    <property type="molecule type" value="mRNA"/>
</dbReference>
<dbReference type="EMBL" id="AL121966">
    <property type="status" value="NOT_ANNOTATED_CDS"/>
    <property type="molecule type" value="Genomic_DNA"/>
</dbReference>
<dbReference type="EMBL" id="AL354857">
    <property type="status" value="NOT_ANNOTATED_CDS"/>
    <property type="molecule type" value="Genomic_DNA"/>
</dbReference>
<dbReference type="EMBL" id="AL591036">
    <property type="status" value="NOT_ANNOTATED_CDS"/>
    <property type="molecule type" value="Genomic_DNA"/>
</dbReference>
<dbReference type="EMBL" id="CH471051">
    <property type="protein sequence ID" value="EAW48518.1"/>
    <property type="molecule type" value="Genomic_DNA"/>
</dbReference>
<dbReference type="EMBL" id="BC027940">
    <property type="protein sequence ID" value="AAH27940.1"/>
    <property type="molecule type" value="mRNA"/>
</dbReference>
<dbReference type="EMBL" id="BC126125">
    <property type="protein sequence ID" value="AAI26126.1"/>
    <property type="molecule type" value="mRNA"/>
</dbReference>
<dbReference type="EMBL" id="BC126151">
    <property type="protein sequence ID" value="AAI26152.1"/>
    <property type="molecule type" value="mRNA"/>
</dbReference>
<dbReference type="EMBL" id="BC143857">
    <property type="protein sequence ID" value="AAI43858.1"/>
    <property type="molecule type" value="mRNA"/>
</dbReference>
<dbReference type="EMBL" id="BC143858">
    <property type="protein sequence ID" value="AAI43859.1"/>
    <property type="molecule type" value="mRNA"/>
</dbReference>
<dbReference type="CCDS" id="CCDS5031.1">
    <molecule id="Q15375-1"/>
</dbReference>
<dbReference type="CCDS" id="CCDS75494.1">
    <molecule id="Q15375-3"/>
</dbReference>
<dbReference type="CCDS" id="CCDS93973.1">
    <molecule id="Q15375-4"/>
</dbReference>
<dbReference type="PIR" id="I58351">
    <property type="entry name" value="I58351"/>
</dbReference>
<dbReference type="RefSeq" id="NP_001275558.1">
    <molecule id="Q15375-2"/>
    <property type="nucleotide sequence ID" value="NM_001288629.2"/>
</dbReference>
<dbReference type="RefSeq" id="NP_001275559.1">
    <molecule id="Q15375-3"/>
    <property type="nucleotide sequence ID" value="NM_001288630.2"/>
</dbReference>
<dbReference type="RefSeq" id="NP_001363394.1">
    <molecule id="Q15375-4"/>
    <property type="nucleotide sequence ID" value="NM_001376465.1"/>
</dbReference>
<dbReference type="RefSeq" id="NP_004431.1">
    <molecule id="Q15375-1"/>
    <property type="nucleotide sequence ID" value="NM_004440.4"/>
</dbReference>
<dbReference type="RefSeq" id="XP_005248726.1">
    <property type="nucleotide sequence ID" value="XM_005248669.2"/>
</dbReference>
<dbReference type="PDB" id="2REI">
    <property type="method" value="X-ray"/>
    <property type="resolution" value="1.60 A"/>
    <property type="chains" value="A=590-899"/>
</dbReference>
<dbReference type="PDB" id="3DKO">
    <property type="method" value="X-ray"/>
    <property type="resolution" value="2.00 A"/>
    <property type="chains" value="A=590-899"/>
</dbReference>
<dbReference type="PDB" id="3H8M">
    <property type="method" value="X-ray"/>
    <property type="resolution" value="2.10 A"/>
    <property type="chains" value="A/B=919-990"/>
</dbReference>
<dbReference type="PDB" id="3NRU">
    <property type="method" value="X-ray"/>
    <property type="resolution" value="2.30 A"/>
    <property type="chains" value="A/B/C/D/E/F/G/H/I/J/K/L=32-204"/>
</dbReference>
<dbReference type="PDB" id="7EEC">
    <property type="method" value="X-ray"/>
    <property type="resolution" value="3.10 A"/>
    <property type="chains" value="A=599-899"/>
</dbReference>
<dbReference type="PDB" id="7EED">
    <property type="method" value="X-ray"/>
    <property type="resolution" value="3.05 A"/>
    <property type="chains" value="A=599-899"/>
</dbReference>
<dbReference type="PDB" id="7EEF">
    <property type="method" value="X-ray"/>
    <property type="resolution" value="2.60 A"/>
    <property type="chains" value="A=599-899"/>
</dbReference>
<dbReference type="PDBsum" id="2REI"/>
<dbReference type="PDBsum" id="3DKO"/>
<dbReference type="PDBsum" id="3H8M"/>
<dbReference type="PDBsum" id="3NRU"/>
<dbReference type="PDBsum" id="7EEC"/>
<dbReference type="PDBsum" id="7EED"/>
<dbReference type="PDBsum" id="7EEF"/>
<dbReference type="SMR" id="Q15375"/>
<dbReference type="BioGRID" id="108359">
    <property type="interactions" value="297"/>
</dbReference>
<dbReference type="FunCoup" id="Q15375">
    <property type="interactions" value="1198"/>
</dbReference>
<dbReference type="IntAct" id="Q15375">
    <property type="interactions" value="235"/>
</dbReference>
<dbReference type="MINT" id="Q15375"/>
<dbReference type="STRING" id="9606.ENSP00000358309"/>
<dbReference type="BindingDB" id="Q15375"/>
<dbReference type="ChEMBL" id="CHEMBL4602"/>
<dbReference type="DrugBank" id="DB07970">
    <property type="generic name" value="5-[(2-methyl-5-{[3-(trifluoromethyl)phenyl]carbamoyl}phenyl)amino]pyridine-3-carboxamide"/>
</dbReference>
<dbReference type="DrugBank" id="DB12010">
    <property type="generic name" value="Fostamatinib"/>
</dbReference>
<dbReference type="DrugCentral" id="Q15375"/>
<dbReference type="GuidetoPHARMACOLOGY" id="1827"/>
<dbReference type="GlyCosmos" id="Q15375">
    <property type="glycosylation" value="4 sites, 1 glycan"/>
</dbReference>
<dbReference type="GlyGen" id="Q15375">
    <property type="glycosylation" value="5 sites, 1 N-linked glycan (1 site), 1 O-linked glycan (2 sites)"/>
</dbReference>
<dbReference type="iPTMnet" id="Q15375"/>
<dbReference type="PhosphoSitePlus" id="Q15375"/>
<dbReference type="SwissPalm" id="Q15375"/>
<dbReference type="BioMuta" id="EPHA7"/>
<dbReference type="DMDM" id="146345416"/>
<dbReference type="CPTAC" id="CPTAC-1783"/>
<dbReference type="CPTAC" id="CPTAC-2787"/>
<dbReference type="CPTAC" id="CPTAC-2830"/>
<dbReference type="jPOST" id="Q15375"/>
<dbReference type="MassIVE" id="Q15375"/>
<dbReference type="PaxDb" id="9606-ENSP00000358309"/>
<dbReference type="PeptideAtlas" id="Q15375"/>
<dbReference type="ProteomicsDB" id="60549">
    <molecule id="Q15375-1"/>
</dbReference>
<dbReference type="ProteomicsDB" id="60550">
    <molecule id="Q15375-2"/>
</dbReference>
<dbReference type="ProteomicsDB" id="60551">
    <molecule id="Q15375-3"/>
</dbReference>
<dbReference type="ProteomicsDB" id="60552">
    <molecule id="Q15375-4"/>
</dbReference>
<dbReference type="ProteomicsDB" id="60553">
    <molecule id="Q15375-5"/>
</dbReference>
<dbReference type="Pumba" id="Q15375"/>
<dbReference type="Antibodypedia" id="642">
    <property type="antibodies" value="553 antibodies from 37 providers"/>
</dbReference>
<dbReference type="DNASU" id="2045"/>
<dbReference type="Ensembl" id="ENST00000369297.1">
    <molecule id="Q15375-3"/>
    <property type="protein sequence ID" value="ENSP00000358303.1"/>
    <property type="gene ID" value="ENSG00000135333.15"/>
</dbReference>
<dbReference type="Ensembl" id="ENST00000369303.9">
    <molecule id="Q15375-1"/>
    <property type="protein sequence ID" value="ENSP00000358309.4"/>
    <property type="gene ID" value="ENSG00000135333.15"/>
</dbReference>
<dbReference type="Ensembl" id="ENST00000680224.1">
    <molecule id="Q15375-4"/>
    <property type="protein sequence ID" value="ENSP00000506130.1"/>
    <property type="gene ID" value="ENSG00000135333.15"/>
</dbReference>
<dbReference type="GeneID" id="2045"/>
<dbReference type="KEGG" id="hsa:2045"/>
<dbReference type="MANE-Select" id="ENST00000369303.9">
    <property type="protein sequence ID" value="ENSP00000358309.4"/>
    <property type="RefSeq nucleotide sequence ID" value="NM_004440.4"/>
    <property type="RefSeq protein sequence ID" value="NP_004431.1"/>
</dbReference>
<dbReference type="UCSC" id="uc003poe.5">
    <molecule id="Q15375-1"/>
    <property type="organism name" value="human"/>
</dbReference>
<dbReference type="AGR" id="HGNC:3390"/>
<dbReference type="CTD" id="2045"/>
<dbReference type="DisGeNET" id="2045"/>
<dbReference type="GeneCards" id="EPHA7"/>
<dbReference type="HGNC" id="HGNC:3390">
    <property type="gene designation" value="EPHA7"/>
</dbReference>
<dbReference type="HPA" id="ENSG00000135333">
    <property type="expression patterns" value="Group enriched (intestine, parathyroid gland)"/>
</dbReference>
<dbReference type="MalaCards" id="EPHA7"/>
<dbReference type="MIM" id="602190">
    <property type="type" value="gene"/>
</dbReference>
<dbReference type="neXtProt" id="NX_Q15375"/>
<dbReference type="OpenTargets" id="ENSG00000135333"/>
<dbReference type="PharmGKB" id="PA27822"/>
<dbReference type="VEuPathDB" id="HostDB:ENSG00000135333"/>
<dbReference type="eggNOG" id="KOG0196">
    <property type="taxonomic scope" value="Eukaryota"/>
</dbReference>
<dbReference type="GeneTree" id="ENSGT00940000160189"/>
<dbReference type="HOGENOM" id="CLU_000288_141_0_1"/>
<dbReference type="InParanoid" id="Q15375"/>
<dbReference type="OMA" id="ETDYNTG"/>
<dbReference type="OrthoDB" id="4062651at2759"/>
<dbReference type="PAN-GO" id="Q15375">
    <property type="GO annotations" value="8 GO annotations based on evolutionary models"/>
</dbReference>
<dbReference type="PhylomeDB" id="Q15375"/>
<dbReference type="TreeFam" id="TF315608"/>
<dbReference type="BRENDA" id="2.7.10.1">
    <property type="organism ID" value="2681"/>
</dbReference>
<dbReference type="PathwayCommons" id="Q15375"/>
<dbReference type="Reactome" id="R-HSA-2682334">
    <property type="pathway name" value="EPH-Ephrin signaling"/>
</dbReference>
<dbReference type="Reactome" id="R-HSA-3928663">
    <property type="pathway name" value="EPHA-mediated growth cone collapse"/>
</dbReference>
<dbReference type="Reactome" id="R-HSA-3928665">
    <property type="pathway name" value="EPH-ephrin mediated repulsion of cells"/>
</dbReference>
<dbReference type="SignaLink" id="Q15375"/>
<dbReference type="SIGNOR" id="Q15375"/>
<dbReference type="BioGRID-ORCS" id="2045">
    <property type="hits" value="14 hits in 1184 CRISPR screens"/>
</dbReference>
<dbReference type="ChiTaRS" id="EPHA7">
    <property type="organism name" value="human"/>
</dbReference>
<dbReference type="EvolutionaryTrace" id="Q15375"/>
<dbReference type="GeneWiki" id="EPHA7"/>
<dbReference type="GenomeRNAi" id="2045"/>
<dbReference type="Pharos" id="Q15375">
    <property type="development level" value="Tchem"/>
</dbReference>
<dbReference type="PRO" id="PR:Q15375"/>
<dbReference type="Proteomes" id="UP000005640">
    <property type="component" value="Chromosome 6"/>
</dbReference>
<dbReference type="RNAct" id="Q15375">
    <property type="molecule type" value="protein"/>
</dbReference>
<dbReference type="Bgee" id="ENSG00000135333">
    <property type="expression patterns" value="Expressed in cortical plate and 131 other cell types or tissues"/>
</dbReference>
<dbReference type="GO" id="GO:0030425">
    <property type="term" value="C:dendrite"/>
    <property type="evidence" value="ECO:0000318"/>
    <property type="project" value="GO_Central"/>
</dbReference>
<dbReference type="GO" id="GO:0098978">
    <property type="term" value="C:glutamatergic synapse"/>
    <property type="evidence" value="ECO:0007669"/>
    <property type="project" value="Ensembl"/>
</dbReference>
<dbReference type="GO" id="GO:0098686">
    <property type="term" value="C:hippocampal mossy fiber to CA3 synapse"/>
    <property type="evidence" value="ECO:0007669"/>
    <property type="project" value="Ensembl"/>
</dbReference>
<dbReference type="GO" id="GO:0031594">
    <property type="term" value="C:neuromuscular junction"/>
    <property type="evidence" value="ECO:0007669"/>
    <property type="project" value="Ensembl"/>
</dbReference>
<dbReference type="GO" id="GO:0043025">
    <property type="term" value="C:neuronal cell body"/>
    <property type="evidence" value="ECO:0007669"/>
    <property type="project" value="Ensembl"/>
</dbReference>
<dbReference type="GO" id="GO:0005886">
    <property type="term" value="C:plasma membrane"/>
    <property type="evidence" value="ECO:0000314"/>
    <property type="project" value="ARUK-UCL"/>
</dbReference>
<dbReference type="GO" id="GO:0098839">
    <property type="term" value="C:postsynaptic density membrane"/>
    <property type="evidence" value="ECO:0007669"/>
    <property type="project" value="Ensembl"/>
</dbReference>
<dbReference type="GO" id="GO:0098685">
    <property type="term" value="C:Schaffer collateral - CA1 synapse"/>
    <property type="evidence" value="ECO:0007669"/>
    <property type="project" value="Ensembl"/>
</dbReference>
<dbReference type="GO" id="GO:0005524">
    <property type="term" value="F:ATP binding"/>
    <property type="evidence" value="ECO:0007669"/>
    <property type="project" value="UniProtKB-KW"/>
</dbReference>
<dbReference type="GO" id="GO:0008046">
    <property type="term" value="F:axon guidance receptor activity"/>
    <property type="evidence" value="ECO:0000250"/>
    <property type="project" value="UniProtKB"/>
</dbReference>
<dbReference type="GO" id="GO:0045499">
    <property type="term" value="F:chemorepellent activity"/>
    <property type="evidence" value="ECO:0000250"/>
    <property type="project" value="UniProtKB"/>
</dbReference>
<dbReference type="GO" id="GO:0046875">
    <property type="term" value="F:ephrin receptor binding"/>
    <property type="evidence" value="ECO:0007669"/>
    <property type="project" value="Ensembl"/>
</dbReference>
<dbReference type="GO" id="GO:0005004">
    <property type="term" value="F:GPI-linked ephrin receptor activity"/>
    <property type="evidence" value="ECO:0000250"/>
    <property type="project" value="UniProtKB"/>
</dbReference>
<dbReference type="GO" id="GO:0019838">
    <property type="term" value="F:growth factor binding"/>
    <property type="evidence" value="ECO:0007669"/>
    <property type="project" value="Ensembl"/>
</dbReference>
<dbReference type="GO" id="GO:0004713">
    <property type="term" value="F:protein tyrosine kinase activity"/>
    <property type="evidence" value="ECO:0000250"/>
    <property type="project" value="UniProtKB"/>
</dbReference>
<dbReference type="GO" id="GO:0005005">
    <property type="term" value="F:transmembrane-ephrin receptor activity"/>
    <property type="evidence" value="ECO:0000318"/>
    <property type="project" value="GO_Central"/>
</dbReference>
<dbReference type="GO" id="GO:0007411">
    <property type="term" value="P:axon guidance"/>
    <property type="evidence" value="ECO:0000318"/>
    <property type="project" value="GO_Central"/>
</dbReference>
<dbReference type="GO" id="GO:0007420">
    <property type="term" value="P:brain development"/>
    <property type="evidence" value="ECO:0000250"/>
    <property type="project" value="UniProtKB"/>
</dbReference>
<dbReference type="GO" id="GO:0048755">
    <property type="term" value="P:branching morphogenesis of a nerve"/>
    <property type="evidence" value="ECO:0000250"/>
    <property type="project" value="UniProtKB"/>
</dbReference>
<dbReference type="GO" id="GO:0048013">
    <property type="term" value="P:ephrin receptor signaling pathway"/>
    <property type="evidence" value="ECO:0000314"/>
    <property type="project" value="UniProtKB"/>
</dbReference>
<dbReference type="GO" id="GO:0050804">
    <property type="term" value="P:modulation of chemical synaptic transmission"/>
    <property type="evidence" value="ECO:0007669"/>
    <property type="project" value="Ensembl"/>
</dbReference>
<dbReference type="GO" id="GO:0050919">
    <property type="term" value="P:negative chemotaxis"/>
    <property type="evidence" value="ECO:0000250"/>
    <property type="project" value="UniProtKB"/>
</dbReference>
<dbReference type="GO" id="GO:0048671">
    <property type="term" value="P:negative regulation of collateral sprouting"/>
    <property type="evidence" value="ECO:0007669"/>
    <property type="project" value="Ensembl"/>
</dbReference>
<dbReference type="GO" id="GO:0051898">
    <property type="term" value="P:negative regulation of phosphatidylinositol 3-kinase/protein kinase B signal transduction"/>
    <property type="evidence" value="ECO:0007669"/>
    <property type="project" value="Ensembl"/>
</dbReference>
<dbReference type="GO" id="GO:0051964">
    <property type="term" value="P:negative regulation of synapse assembly"/>
    <property type="evidence" value="ECO:0007669"/>
    <property type="project" value="Ensembl"/>
</dbReference>
<dbReference type="GO" id="GO:0072178">
    <property type="term" value="P:nephric duct morphogenesis"/>
    <property type="evidence" value="ECO:0007669"/>
    <property type="project" value="Ensembl"/>
</dbReference>
<dbReference type="GO" id="GO:0051402">
    <property type="term" value="P:neuron apoptotic process"/>
    <property type="evidence" value="ECO:0007669"/>
    <property type="project" value="Ensembl"/>
</dbReference>
<dbReference type="GO" id="GO:0016310">
    <property type="term" value="P:phosphorylation"/>
    <property type="evidence" value="ECO:0000250"/>
    <property type="project" value="UniProtKB"/>
</dbReference>
<dbReference type="GO" id="GO:0043525">
    <property type="term" value="P:positive regulation of neuron apoptotic process"/>
    <property type="evidence" value="ECO:0000250"/>
    <property type="project" value="UniProtKB"/>
</dbReference>
<dbReference type="GO" id="GO:0022407">
    <property type="term" value="P:regulation of cell-cell adhesion"/>
    <property type="evidence" value="ECO:0000250"/>
    <property type="project" value="UniProtKB"/>
</dbReference>
<dbReference type="GO" id="GO:0070372">
    <property type="term" value="P:regulation of ERK1 and ERK2 cascade"/>
    <property type="evidence" value="ECO:0000314"/>
    <property type="project" value="UniProtKB"/>
</dbReference>
<dbReference type="GO" id="GO:0050730">
    <property type="term" value="P:regulation of peptidyl-tyrosine phosphorylation"/>
    <property type="evidence" value="ECO:0000314"/>
    <property type="project" value="UniProtKB"/>
</dbReference>
<dbReference type="GO" id="GO:0099175">
    <property type="term" value="P:regulation of postsynapse organization"/>
    <property type="evidence" value="ECO:0007669"/>
    <property type="project" value="Ensembl"/>
</dbReference>
<dbReference type="GO" id="GO:0031952">
    <property type="term" value="P:regulation of protein autophosphorylation"/>
    <property type="evidence" value="ECO:0000250"/>
    <property type="project" value="UniProtKB"/>
</dbReference>
<dbReference type="GO" id="GO:0031290">
    <property type="term" value="P:retinal ganglion cell axon guidance"/>
    <property type="evidence" value="ECO:0007669"/>
    <property type="project" value="Ensembl"/>
</dbReference>
<dbReference type="CDD" id="cd10485">
    <property type="entry name" value="EphR_LBD_A7"/>
    <property type="match status" value="1"/>
</dbReference>
<dbReference type="CDD" id="cd00063">
    <property type="entry name" value="FN3"/>
    <property type="match status" value="2"/>
</dbReference>
<dbReference type="CDD" id="cd05066">
    <property type="entry name" value="PTKc_EphR_A"/>
    <property type="match status" value="1"/>
</dbReference>
<dbReference type="CDD" id="cd09548">
    <property type="entry name" value="SAM_EPH-A7"/>
    <property type="match status" value="1"/>
</dbReference>
<dbReference type="CDD" id="cd00185">
    <property type="entry name" value="TNFRSF"/>
    <property type="match status" value="1"/>
</dbReference>
<dbReference type="FunFam" id="1.10.150.50:FF:000001">
    <property type="entry name" value="Ephrin type-A receptor 5"/>
    <property type="match status" value="1"/>
</dbReference>
<dbReference type="FunFam" id="2.10.50.10:FF:000001">
    <property type="entry name" value="Ephrin type-A receptor 5"/>
    <property type="match status" value="1"/>
</dbReference>
<dbReference type="FunFam" id="2.60.40.10:FF:000045">
    <property type="entry name" value="Ephrin type-A receptor 5"/>
    <property type="match status" value="1"/>
</dbReference>
<dbReference type="FunFam" id="2.60.40.1770:FF:000001">
    <property type="entry name" value="Ephrin type-A receptor 5"/>
    <property type="match status" value="1"/>
</dbReference>
<dbReference type="FunFam" id="3.30.200.20:FF:000001">
    <property type="entry name" value="Ephrin type-A receptor 5"/>
    <property type="match status" value="1"/>
</dbReference>
<dbReference type="FunFam" id="1.10.510.10:FF:000130">
    <property type="entry name" value="Ephrin type-A receptor 7"/>
    <property type="match status" value="1"/>
</dbReference>
<dbReference type="FunFam" id="2.60.120.260:FF:000001">
    <property type="entry name" value="Ephrin type-A receptor 7"/>
    <property type="match status" value="1"/>
</dbReference>
<dbReference type="FunFam" id="2.60.40.10:FF:000190">
    <property type="entry name" value="Ephrin type-A receptor 7"/>
    <property type="match status" value="1"/>
</dbReference>
<dbReference type="Gene3D" id="2.60.40.1770">
    <property type="entry name" value="ephrin a2 ectodomain"/>
    <property type="match status" value="1"/>
</dbReference>
<dbReference type="Gene3D" id="2.60.120.260">
    <property type="entry name" value="Galactose-binding domain-like"/>
    <property type="match status" value="1"/>
</dbReference>
<dbReference type="Gene3D" id="2.60.40.10">
    <property type="entry name" value="Immunoglobulins"/>
    <property type="match status" value="2"/>
</dbReference>
<dbReference type="Gene3D" id="3.30.200.20">
    <property type="entry name" value="Phosphorylase Kinase, domain 1"/>
    <property type="match status" value="1"/>
</dbReference>
<dbReference type="Gene3D" id="1.10.150.50">
    <property type="entry name" value="Transcription Factor, Ets-1"/>
    <property type="match status" value="1"/>
</dbReference>
<dbReference type="Gene3D" id="1.10.510.10">
    <property type="entry name" value="Transferase(Phosphotransferase) domain 1"/>
    <property type="match status" value="1"/>
</dbReference>
<dbReference type="Gene3D" id="2.10.50.10">
    <property type="entry name" value="Tumor Necrosis Factor Receptor, subunit A, domain 2"/>
    <property type="match status" value="1"/>
</dbReference>
<dbReference type="InterPro" id="IPR027936">
    <property type="entry name" value="Eph_TM"/>
</dbReference>
<dbReference type="InterPro" id="IPR034283">
    <property type="entry name" value="EphA7_rcpt_lig-bd"/>
</dbReference>
<dbReference type="InterPro" id="IPR001090">
    <property type="entry name" value="Ephrin_rcpt_lig-bd_dom"/>
</dbReference>
<dbReference type="InterPro" id="IPR050449">
    <property type="entry name" value="Ephrin_rcpt_TKs"/>
</dbReference>
<dbReference type="InterPro" id="IPR003961">
    <property type="entry name" value="FN3_dom"/>
</dbReference>
<dbReference type="InterPro" id="IPR036116">
    <property type="entry name" value="FN3_sf"/>
</dbReference>
<dbReference type="InterPro" id="IPR008979">
    <property type="entry name" value="Galactose-bd-like_sf"/>
</dbReference>
<dbReference type="InterPro" id="IPR009030">
    <property type="entry name" value="Growth_fac_rcpt_cys_sf"/>
</dbReference>
<dbReference type="InterPro" id="IPR013783">
    <property type="entry name" value="Ig-like_fold"/>
</dbReference>
<dbReference type="InterPro" id="IPR011009">
    <property type="entry name" value="Kinase-like_dom_sf"/>
</dbReference>
<dbReference type="InterPro" id="IPR000719">
    <property type="entry name" value="Prot_kinase_dom"/>
</dbReference>
<dbReference type="InterPro" id="IPR017441">
    <property type="entry name" value="Protein_kinase_ATP_BS"/>
</dbReference>
<dbReference type="InterPro" id="IPR001660">
    <property type="entry name" value="SAM"/>
</dbReference>
<dbReference type="InterPro" id="IPR013761">
    <property type="entry name" value="SAM/pointed_sf"/>
</dbReference>
<dbReference type="InterPro" id="IPR001245">
    <property type="entry name" value="Ser-Thr/Tyr_kinase_cat_dom"/>
</dbReference>
<dbReference type="InterPro" id="IPR011641">
    <property type="entry name" value="Tyr-kin_ephrin_A/B_rcpt-like"/>
</dbReference>
<dbReference type="InterPro" id="IPR008266">
    <property type="entry name" value="Tyr_kinase_AS"/>
</dbReference>
<dbReference type="InterPro" id="IPR020635">
    <property type="entry name" value="Tyr_kinase_cat_dom"/>
</dbReference>
<dbReference type="InterPro" id="IPR016257">
    <property type="entry name" value="Tyr_kinase_ephrin_rcpt"/>
</dbReference>
<dbReference type="InterPro" id="IPR001426">
    <property type="entry name" value="Tyr_kinase_rcpt_V_CS"/>
</dbReference>
<dbReference type="PANTHER" id="PTHR46877">
    <property type="entry name" value="EPH RECEPTOR A5"/>
    <property type="match status" value="1"/>
</dbReference>
<dbReference type="PANTHER" id="PTHR46877:SF9">
    <property type="entry name" value="EPHRIN TYPE-A RECEPTOR 7"/>
    <property type="match status" value="1"/>
</dbReference>
<dbReference type="Pfam" id="PF14575">
    <property type="entry name" value="EphA2_TM"/>
    <property type="match status" value="1"/>
</dbReference>
<dbReference type="Pfam" id="PF01404">
    <property type="entry name" value="Ephrin_lbd"/>
    <property type="match status" value="1"/>
</dbReference>
<dbReference type="Pfam" id="PF07699">
    <property type="entry name" value="Ephrin_rec_like"/>
    <property type="match status" value="1"/>
</dbReference>
<dbReference type="Pfam" id="PF00041">
    <property type="entry name" value="fn3"/>
    <property type="match status" value="2"/>
</dbReference>
<dbReference type="Pfam" id="PF07714">
    <property type="entry name" value="PK_Tyr_Ser-Thr"/>
    <property type="match status" value="1"/>
</dbReference>
<dbReference type="Pfam" id="PF00536">
    <property type="entry name" value="SAM_1"/>
    <property type="match status" value="1"/>
</dbReference>
<dbReference type="PIRSF" id="PIRSF000666">
    <property type="entry name" value="TyrPK_ephrin_receptor"/>
    <property type="match status" value="1"/>
</dbReference>
<dbReference type="PRINTS" id="PR00014">
    <property type="entry name" value="FNTYPEIII"/>
</dbReference>
<dbReference type="PRINTS" id="PR00109">
    <property type="entry name" value="TYRKINASE"/>
</dbReference>
<dbReference type="SMART" id="SM00615">
    <property type="entry name" value="EPH_lbd"/>
    <property type="match status" value="1"/>
</dbReference>
<dbReference type="SMART" id="SM01411">
    <property type="entry name" value="Ephrin_rec_like"/>
    <property type="match status" value="1"/>
</dbReference>
<dbReference type="SMART" id="SM00060">
    <property type="entry name" value="FN3"/>
    <property type="match status" value="2"/>
</dbReference>
<dbReference type="SMART" id="SM00454">
    <property type="entry name" value="SAM"/>
    <property type="match status" value="1"/>
</dbReference>
<dbReference type="SMART" id="SM00219">
    <property type="entry name" value="TyrKc"/>
    <property type="match status" value="1"/>
</dbReference>
<dbReference type="SUPFAM" id="SSF49265">
    <property type="entry name" value="Fibronectin type III"/>
    <property type="match status" value="1"/>
</dbReference>
<dbReference type="SUPFAM" id="SSF49785">
    <property type="entry name" value="Galactose-binding domain-like"/>
    <property type="match status" value="1"/>
</dbReference>
<dbReference type="SUPFAM" id="SSF57184">
    <property type="entry name" value="Growth factor receptor domain"/>
    <property type="match status" value="1"/>
</dbReference>
<dbReference type="SUPFAM" id="SSF56112">
    <property type="entry name" value="Protein kinase-like (PK-like)"/>
    <property type="match status" value="1"/>
</dbReference>
<dbReference type="SUPFAM" id="SSF47769">
    <property type="entry name" value="SAM/Pointed domain"/>
    <property type="match status" value="1"/>
</dbReference>
<dbReference type="PROSITE" id="PS01186">
    <property type="entry name" value="EGF_2"/>
    <property type="match status" value="1"/>
</dbReference>
<dbReference type="PROSITE" id="PS51550">
    <property type="entry name" value="EPH_LBD"/>
    <property type="match status" value="1"/>
</dbReference>
<dbReference type="PROSITE" id="PS50853">
    <property type="entry name" value="FN3"/>
    <property type="match status" value="2"/>
</dbReference>
<dbReference type="PROSITE" id="PS00107">
    <property type="entry name" value="PROTEIN_KINASE_ATP"/>
    <property type="match status" value="1"/>
</dbReference>
<dbReference type="PROSITE" id="PS50011">
    <property type="entry name" value="PROTEIN_KINASE_DOM"/>
    <property type="match status" value="1"/>
</dbReference>
<dbReference type="PROSITE" id="PS00109">
    <property type="entry name" value="PROTEIN_KINASE_TYR"/>
    <property type="match status" value="1"/>
</dbReference>
<dbReference type="PROSITE" id="PS00790">
    <property type="entry name" value="RECEPTOR_TYR_KIN_V_1"/>
    <property type="match status" value="1"/>
</dbReference>
<dbReference type="PROSITE" id="PS00791">
    <property type="entry name" value="RECEPTOR_TYR_KIN_V_2"/>
    <property type="match status" value="1"/>
</dbReference>
<dbReference type="PROSITE" id="PS50105">
    <property type="entry name" value="SAM_DOMAIN"/>
    <property type="match status" value="1"/>
</dbReference>
<sequence length="998" mass="112097">MVFQTRYPSWIILCYIWLLRFAHTGEAQAAKEVLLLDSKAQQTELEWISSPPNGWEEISGLDENYTPIRTYQVCQVMEPNQNNWLRTNWISKGNAQRIFVELKFTLRDCNSLPGVLGTCKETFNLYYYETDYDTGRNIRENLYVKIDTIAADESFTQGDLGERKMKLNTEVREIGPLSKKGFYLAFQDVGACIALVSVKVYYKKCWSIIENLAIFPDTVTGSEFSSLVEVRGTCVSSAEEEAENAPRMHCSAEGEWLVPIGKCICKAGYQQKGDTCEPCGRGFYKSSSQDLQCSRCPTHSFSDKEGSSRCECEDGYYRAPSDPPYVACTRPPSAPQNLIFNINQTTVSLEWSPPADNGGRNDVTYRILCKRCSWEQGECVPCGSNIGYMPQQTGLEDNYVTVMDLLAHANYTFEVEAVNGVSDLSRSQRLFAAVSITTGQAAPSQVSGVMKERVLQRSVELSWQEPEHPNGVITEYEIKYYEKDQRERTYSTVKTKSTSASINNLKPGTVYVFQIRAFTAAGYGNYSPRLDVATLEEATGKMFEATAVSSEQNPVIIIAVVAVAGTIILVFMVFGFIIGRRHCGYSKADQEGDEELYFHFKFPGTKTYIDPETYEDPNRAVHQFAKELDASCIKIERVIGAGEFGEVCSGRLKLPGKRDVAVAIKTLKVGYTEKQRRDFLCEASIMGQFDHPNVVHLEGVVTRGKPVMIVIEFMENGALDAFLRKHDGQFTVIQLVGMLRGIAAGMRYLADMGYVHRDLAARNILVNSNLVCKVSDFGLSRVIEDDPEAVYTTTGGKIPVRWTAPEAIQYRKFTSASDVWSYGIVMWEVMSYGERPYWDMSNQDVIKAIEEGYRLPAPMDCPAGLHQLMLDCWQKERAERPKFEQIVGILDKMIRNPNSLKTPLGTCSRPISPLLDQNTPDFTTFCSVGEWLQAIKMERYKDNFTAAGYNSLESVARMTIEDVMSLGITLVGHQKKIMSSIQTMRAQMLHLHGTGIQV</sequence>
<reference key="1">
    <citation type="journal article" date="1995" name="Oncogene">
        <title>cDNA cloning and tissue distribution of five human EPH-like receptor protein-tyrosine kinases.</title>
        <authorList>
            <person name="Fox G.M."/>
            <person name="Holst P.L."/>
            <person name="Chute H.T."/>
            <person name="Lindberg R.A."/>
            <person name="Janssen A.M."/>
            <person name="Basu R."/>
            <person name="Welcher A.A."/>
        </authorList>
    </citation>
    <scope>NUCLEOTIDE SEQUENCE [MRNA] (ISOFORM 1)</scope>
    <source>
        <tissue>Fetal brain</tissue>
    </source>
</reference>
<reference key="2">
    <citation type="journal article" date="2004" name="Nat. Genet.">
        <title>Complete sequencing and characterization of 21,243 full-length human cDNAs.</title>
        <authorList>
            <person name="Ota T."/>
            <person name="Suzuki Y."/>
            <person name="Nishikawa T."/>
            <person name="Otsuki T."/>
            <person name="Sugiyama T."/>
            <person name="Irie R."/>
            <person name="Wakamatsu A."/>
            <person name="Hayashi K."/>
            <person name="Sato H."/>
            <person name="Nagai K."/>
            <person name="Kimura K."/>
            <person name="Makita H."/>
            <person name="Sekine M."/>
            <person name="Obayashi M."/>
            <person name="Nishi T."/>
            <person name="Shibahara T."/>
            <person name="Tanaka T."/>
            <person name="Ishii S."/>
            <person name="Yamamoto J."/>
            <person name="Saito K."/>
            <person name="Kawai Y."/>
            <person name="Isono Y."/>
            <person name="Nakamura Y."/>
            <person name="Nagahari K."/>
            <person name="Murakami K."/>
            <person name="Yasuda T."/>
            <person name="Iwayanagi T."/>
            <person name="Wagatsuma M."/>
            <person name="Shiratori A."/>
            <person name="Sudo H."/>
            <person name="Hosoiri T."/>
            <person name="Kaku Y."/>
            <person name="Kodaira H."/>
            <person name="Kondo H."/>
            <person name="Sugawara M."/>
            <person name="Takahashi M."/>
            <person name="Kanda K."/>
            <person name="Yokoi T."/>
            <person name="Furuya T."/>
            <person name="Kikkawa E."/>
            <person name="Omura Y."/>
            <person name="Abe K."/>
            <person name="Kamihara K."/>
            <person name="Katsuta N."/>
            <person name="Sato K."/>
            <person name="Tanikawa M."/>
            <person name="Yamazaki M."/>
            <person name="Ninomiya K."/>
            <person name="Ishibashi T."/>
            <person name="Yamashita H."/>
            <person name="Murakawa K."/>
            <person name="Fujimori K."/>
            <person name="Tanai H."/>
            <person name="Kimata M."/>
            <person name="Watanabe M."/>
            <person name="Hiraoka S."/>
            <person name="Chiba Y."/>
            <person name="Ishida S."/>
            <person name="Ono Y."/>
            <person name="Takiguchi S."/>
            <person name="Watanabe S."/>
            <person name="Yosida M."/>
            <person name="Hotuta T."/>
            <person name="Kusano J."/>
            <person name="Kanehori K."/>
            <person name="Takahashi-Fujii A."/>
            <person name="Hara H."/>
            <person name="Tanase T.-O."/>
            <person name="Nomura Y."/>
            <person name="Togiya S."/>
            <person name="Komai F."/>
            <person name="Hara R."/>
            <person name="Takeuchi K."/>
            <person name="Arita M."/>
            <person name="Imose N."/>
            <person name="Musashino K."/>
            <person name="Yuuki H."/>
            <person name="Oshima A."/>
            <person name="Sasaki N."/>
            <person name="Aotsuka S."/>
            <person name="Yoshikawa Y."/>
            <person name="Matsunawa H."/>
            <person name="Ichihara T."/>
            <person name="Shiohata N."/>
            <person name="Sano S."/>
            <person name="Moriya S."/>
            <person name="Momiyama H."/>
            <person name="Satoh N."/>
            <person name="Takami S."/>
            <person name="Terashima Y."/>
            <person name="Suzuki O."/>
            <person name="Nakagawa S."/>
            <person name="Senoh A."/>
            <person name="Mizoguchi H."/>
            <person name="Goto Y."/>
            <person name="Shimizu F."/>
            <person name="Wakebe H."/>
            <person name="Hishigaki H."/>
            <person name="Watanabe T."/>
            <person name="Sugiyama A."/>
            <person name="Takemoto M."/>
            <person name="Kawakami B."/>
            <person name="Yamazaki M."/>
            <person name="Watanabe K."/>
            <person name="Kumagai A."/>
            <person name="Itakura S."/>
            <person name="Fukuzumi Y."/>
            <person name="Fujimori Y."/>
            <person name="Komiyama M."/>
            <person name="Tashiro H."/>
            <person name="Tanigami A."/>
            <person name="Fujiwara T."/>
            <person name="Ono T."/>
            <person name="Yamada K."/>
            <person name="Fujii Y."/>
            <person name="Ozaki K."/>
            <person name="Hirao M."/>
            <person name="Ohmori Y."/>
            <person name="Kawabata A."/>
            <person name="Hikiji T."/>
            <person name="Kobatake N."/>
            <person name="Inagaki H."/>
            <person name="Ikema Y."/>
            <person name="Okamoto S."/>
            <person name="Okitani R."/>
            <person name="Kawakami T."/>
            <person name="Noguchi S."/>
            <person name="Itoh T."/>
            <person name="Shigeta K."/>
            <person name="Senba T."/>
            <person name="Matsumura K."/>
            <person name="Nakajima Y."/>
            <person name="Mizuno T."/>
            <person name="Morinaga M."/>
            <person name="Sasaki M."/>
            <person name="Togashi T."/>
            <person name="Oyama M."/>
            <person name="Hata H."/>
            <person name="Watanabe M."/>
            <person name="Komatsu T."/>
            <person name="Mizushima-Sugano J."/>
            <person name="Satoh T."/>
            <person name="Shirai Y."/>
            <person name="Takahashi Y."/>
            <person name="Nakagawa K."/>
            <person name="Okumura K."/>
            <person name="Nagase T."/>
            <person name="Nomura N."/>
            <person name="Kikuchi H."/>
            <person name="Masuho Y."/>
            <person name="Yamashita R."/>
            <person name="Nakai K."/>
            <person name="Yada T."/>
            <person name="Nakamura Y."/>
            <person name="Ohara O."/>
            <person name="Isogai T."/>
            <person name="Sugano S."/>
        </authorList>
    </citation>
    <scope>NUCLEOTIDE SEQUENCE [LARGE SCALE MRNA] (ISOFORM 2)</scope>
</reference>
<reference key="3">
    <citation type="submission" date="2005-03" db="EMBL/GenBank/DDBJ databases">
        <authorList>
            <person name="Totoki Y."/>
            <person name="Toyoda A."/>
            <person name="Takeda T."/>
            <person name="Sakaki Y."/>
            <person name="Tanaka A."/>
            <person name="Yokoyama S."/>
            <person name="Ohara O."/>
            <person name="Nagase T."/>
            <person name="Kikuno R.F."/>
        </authorList>
    </citation>
    <scope>NUCLEOTIDE SEQUENCE [LARGE SCALE MRNA] (ISOFORM 2)</scope>
    <source>
        <tissue>Brain</tissue>
    </source>
</reference>
<reference key="4">
    <citation type="journal article" date="2003" name="Nature">
        <title>The DNA sequence and analysis of human chromosome 6.</title>
        <authorList>
            <person name="Mungall A.J."/>
            <person name="Palmer S.A."/>
            <person name="Sims S.K."/>
            <person name="Edwards C.A."/>
            <person name="Ashurst J.L."/>
            <person name="Wilming L."/>
            <person name="Jones M.C."/>
            <person name="Horton R."/>
            <person name="Hunt S.E."/>
            <person name="Scott C.E."/>
            <person name="Gilbert J.G.R."/>
            <person name="Clamp M.E."/>
            <person name="Bethel G."/>
            <person name="Milne S."/>
            <person name="Ainscough R."/>
            <person name="Almeida J.P."/>
            <person name="Ambrose K.D."/>
            <person name="Andrews T.D."/>
            <person name="Ashwell R.I.S."/>
            <person name="Babbage A.K."/>
            <person name="Bagguley C.L."/>
            <person name="Bailey J."/>
            <person name="Banerjee R."/>
            <person name="Barker D.J."/>
            <person name="Barlow K.F."/>
            <person name="Bates K."/>
            <person name="Beare D.M."/>
            <person name="Beasley H."/>
            <person name="Beasley O."/>
            <person name="Bird C.P."/>
            <person name="Blakey S.E."/>
            <person name="Bray-Allen S."/>
            <person name="Brook J."/>
            <person name="Brown A.J."/>
            <person name="Brown J.Y."/>
            <person name="Burford D.C."/>
            <person name="Burrill W."/>
            <person name="Burton J."/>
            <person name="Carder C."/>
            <person name="Carter N.P."/>
            <person name="Chapman J.C."/>
            <person name="Clark S.Y."/>
            <person name="Clark G."/>
            <person name="Clee C.M."/>
            <person name="Clegg S."/>
            <person name="Cobley V."/>
            <person name="Collier R.E."/>
            <person name="Collins J.E."/>
            <person name="Colman L.K."/>
            <person name="Corby N.R."/>
            <person name="Coville G.J."/>
            <person name="Culley K.M."/>
            <person name="Dhami P."/>
            <person name="Davies J."/>
            <person name="Dunn M."/>
            <person name="Earthrowl M.E."/>
            <person name="Ellington A.E."/>
            <person name="Evans K.A."/>
            <person name="Faulkner L."/>
            <person name="Francis M.D."/>
            <person name="Frankish A."/>
            <person name="Frankland J."/>
            <person name="French L."/>
            <person name="Garner P."/>
            <person name="Garnett J."/>
            <person name="Ghori M.J."/>
            <person name="Gilby L.M."/>
            <person name="Gillson C.J."/>
            <person name="Glithero R.J."/>
            <person name="Grafham D.V."/>
            <person name="Grant M."/>
            <person name="Gribble S."/>
            <person name="Griffiths C."/>
            <person name="Griffiths M.N.D."/>
            <person name="Hall R."/>
            <person name="Halls K.S."/>
            <person name="Hammond S."/>
            <person name="Harley J.L."/>
            <person name="Hart E.A."/>
            <person name="Heath P.D."/>
            <person name="Heathcott R."/>
            <person name="Holmes S.J."/>
            <person name="Howden P.J."/>
            <person name="Howe K.L."/>
            <person name="Howell G.R."/>
            <person name="Huckle E."/>
            <person name="Humphray S.J."/>
            <person name="Humphries M.D."/>
            <person name="Hunt A.R."/>
            <person name="Johnson C.M."/>
            <person name="Joy A.A."/>
            <person name="Kay M."/>
            <person name="Keenan S.J."/>
            <person name="Kimberley A.M."/>
            <person name="King A."/>
            <person name="Laird G.K."/>
            <person name="Langford C."/>
            <person name="Lawlor S."/>
            <person name="Leongamornlert D.A."/>
            <person name="Leversha M."/>
            <person name="Lloyd C.R."/>
            <person name="Lloyd D.M."/>
            <person name="Loveland J.E."/>
            <person name="Lovell J."/>
            <person name="Martin S."/>
            <person name="Mashreghi-Mohammadi M."/>
            <person name="Maslen G.L."/>
            <person name="Matthews L."/>
            <person name="McCann O.T."/>
            <person name="McLaren S.J."/>
            <person name="McLay K."/>
            <person name="McMurray A."/>
            <person name="Moore M.J.F."/>
            <person name="Mullikin J.C."/>
            <person name="Niblett D."/>
            <person name="Nickerson T."/>
            <person name="Novik K.L."/>
            <person name="Oliver K."/>
            <person name="Overton-Larty E.K."/>
            <person name="Parker A."/>
            <person name="Patel R."/>
            <person name="Pearce A.V."/>
            <person name="Peck A.I."/>
            <person name="Phillimore B.J.C.T."/>
            <person name="Phillips S."/>
            <person name="Plumb R.W."/>
            <person name="Porter K.M."/>
            <person name="Ramsey Y."/>
            <person name="Ranby S.A."/>
            <person name="Rice C.M."/>
            <person name="Ross M.T."/>
            <person name="Searle S.M."/>
            <person name="Sehra H.K."/>
            <person name="Sheridan E."/>
            <person name="Skuce C.D."/>
            <person name="Smith S."/>
            <person name="Smith M."/>
            <person name="Spraggon L."/>
            <person name="Squares S.L."/>
            <person name="Steward C.A."/>
            <person name="Sycamore N."/>
            <person name="Tamlyn-Hall G."/>
            <person name="Tester J."/>
            <person name="Theaker A.J."/>
            <person name="Thomas D.W."/>
            <person name="Thorpe A."/>
            <person name="Tracey A."/>
            <person name="Tromans A."/>
            <person name="Tubby B."/>
            <person name="Wall M."/>
            <person name="Wallis J.M."/>
            <person name="West A.P."/>
            <person name="White S.S."/>
            <person name="Whitehead S.L."/>
            <person name="Whittaker H."/>
            <person name="Wild A."/>
            <person name="Willey D.J."/>
            <person name="Wilmer T.E."/>
            <person name="Wood J.M."/>
            <person name="Wray P.W."/>
            <person name="Wyatt J.C."/>
            <person name="Young L."/>
            <person name="Younger R.M."/>
            <person name="Bentley D.R."/>
            <person name="Coulson A."/>
            <person name="Durbin R.M."/>
            <person name="Hubbard T."/>
            <person name="Sulston J.E."/>
            <person name="Dunham I."/>
            <person name="Rogers J."/>
            <person name="Beck S."/>
        </authorList>
    </citation>
    <scope>NUCLEOTIDE SEQUENCE [LARGE SCALE GENOMIC DNA]</scope>
</reference>
<reference key="5">
    <citation type="submission" date="2005-09" db="EMBL/GenBank/DDBJ databases">
        <authorList>
            <person name="Mural R.J."/>
            <person name="Istrail S."/>
            <person name="Sutton G.G."/>
            <person name="Florea L."/>
            <person name="Halpern A.L."/>
            <person name="Mobarry C.M."/>
            <person name="Lippert R."/>
            <person name="Walenz B."/>
            <person name="Shatkay H."/>
            <person name="Dew I."/>
            <person name="Miller J.R."/>
            <person name="Flanigan M.J."/>
            <person name="Edwards N.J."/>
            <person name="Bolanos R."/>
            <person name="Fasulo D."/>
            <person name="Halldorsson B.V."/>
            <person name="Hannenhalli S."/>
            <person name="Turner R."/>
            <person name="Yooseph S."/>
            <person name="Lu F."/>
            <person name="Nusskern D.R."/>
            <person name="Shue B.C."/>
            <person name="Zheng X.H."/>
            <person name="Zhong F."/>
            <person name="Delcher A.L."/>
            <person name="Huson D.H."/>
            <person name="Kravitz S.A."/>
            <person name="Mouchard L."/>
            <person name="Reinert K."/>
            <person name="Remington K.A."/>
            <person name="Clark A.G."/>
            <person name="Waterman M.S."/>
            <person name="Eichler E.E."/>
            <person name="Adams M.D."/>
            <person name="Hunkapiller M.W."/>
            <person name="Myers E.W."/>
            <person name="Venter J.C."/>
        </authorList>
    </citation>
    <scope>NUCLEOTIDE SEQUENCE [LARGE SCALE GENOMIC DNA]</scope>
</reference>
<reference key="6">
    <citation type="journal article" date="2004" name="Genome Res.">
        <title>The status, quality, and expansion of the NIH full-length cDNA project: the Mammalian Gene Collection (MGC).</title>
        <authorList>
            <consortium name="The MGC Project Team"/>
        </authorList>
    </citation>
    <scope>NUCLEOTIDE SEQUENCE [LARGE SCALE MRNA] (ISOFORMS 1; 2; 3 AND 4)</scope>
    <scope>VARIANT VAL-138</scope>
    <source>
        <tissue>Brain</tissue>
    </source>
</reference>
<reference key="7">
    <citation type="journal article" date="1997" name="Cell">
        <title>Unified nomenclature for Eph family receptors and their ligands, the ephrins.</title>
        <authorList>
            <consortium name="Eph nomenclature committee"/>
        </authorList>
    </citation>
    <scope>NOMENCLATURE</scope>
</reference>
<reference key="8">
    <citation type="journal article" date="2007" name="Proc. Natl. Acad. Sci. U.S.A.">
        <title>ALL1 fusion proteins induce deregulation of EphA7 and ERK phosphorylation in human acute leukemias.</title>
        <authorList>
            <person name="Nakanishi H."/>
            <person name="Nakamura T."/>
            <person name="Canaani E."/>
            <person name="Croce C.M."/>
        </authorList>
    </citation>
    <scope>FUNCTION IN MAP2K1; MAP2K2; MAPK1 AND MAPK3 PHOSPHORYLATION</scope>
</reference>
<reference key="9">
    <citation type="journal article" date="2010" name="Int. J. Oncol.">
        <title>Secreted form of EphA7 in lung cancer.</title>
        <authorList>
            <person name="Tsuboi M."/>
            <person name="Mori H."/>
            <person name="Bunai T."/>
            <person name="Kageyama S."/>
            <person name="Suzuki M."/>
            <person name="Okudela K."/>
            <person name="Takamochi K."/>
            <person name="Ogawa H."/>
            <person name="Niwa H."/>
            <person name="Shinmura K."/>
            <person name="Sugimura H."/>
        </authorList>
    </citation>
    <scope>ALTERNATIVE SPLICING (ISOFORM 5)</scope>
</reference>
<reference key="10">
    <citation type="submission" date="2010-06" db="PDB data bank">
        <title>Ephrin A7 ligand binding domain.</title>
        <authorList>
            <person name="Walker J.R."/>
            <person name="Yermekbayeva L."/>
            <person name="Seitova A."/>
            <person name="Kania J."/>
            <person name="Bountra C."/>
            <person name="Weigelt J."/>
            <person name="Arrowsmith C.H."/>
            <person name="Edwards A.M."/>
            <person name="Bochkarev A."/>
            <person name="Dhe-Paganon S."/>
        </authorList>
    </citation>
    <scope>X-RAY CRYSTALLOGRAPHY (2.30 ANGSTROMS) OF 32-204</scope>
</reference>
<reference key="11">
    <citation type="journal article" date="2006" name="Science">
        <title>The consensus coding sequences of human breast and colorectal cancers.</title>
        <authorList>
            <person name="Sjoeblom T."/>
            <person name="Jones S."/>
            <person name="Wood L.D."/>
            <person name="Parsons D.W."/>
            <person name="Lin J."/>
            <person name="Barber T.D."/>
            <person name="Mandelker D."/>
            <person name="Leary R.J."/>
            <person name="Ptak J."/>
            <person name="Silliman N."/>
            <person name="Szabo S."/>
            <person name="Buckhaults P."/>
            <person name="Farrell C."/>
            <person name="Meeh P."/>
            <person name="Markowitz S.D."/>
            <person name="Willis J."/>
            <person name="Dawson D."/>
            <person name="Willson J.K.V."/>
            <person name="Gazdar A.F."/>
            <person name="Hartigan J."/>
            <person name="Wu L."/>
            <person name="Liu C."/>
            <person name="Parmigiani G."/>
            <person name="Park B.H."/>
            <person name="Bachman K.E."/>
            <person name="Papadopoulos N."/>
            <person name="Vogelstein B."/>
            <person name="Kinzler K.W."/>
            <person name="Velculescu V.E."/>
        </authorList>
    </citation>
    <scope>VARIANT [LARGE SCALE ANALYSIS] TRP-371</scope>
</reference>
<reference key="12">
    <citation type="journal article" date="2007" name="Nature">
        <title>Patterns of somatic mutation in human cancer genomes.</title>
        <authorList>
            <person name="Greenman C."/>
            <person name="Stephens P."/>
            <person name="Smith R."/>
            <person name="Dalgliesh G.L."/>
            <person name="Hunter C."/>
            <person name="Bignell G."/>
            <person name="Davies H."/>
            <person name="Teague J."/>
            <person name="Butler A."/>
            <person name="Stevens C."/>
            <person name="Edkins S."/>
            <person name="O'Meara S."/>
            <person name="Vastrik I."/>
            <person name="Schmidt E.E."/>
            <person name="Avis T."/>
            <person name="Barthorpe S."/>
            <person name="Bhamra G."/>
            <person name="Buck G."/>
            <person name="Choudhury B."/>
            <person name="Clements J."/>
            <person name="Cole J."/>
            <person name="Dicks E."/>
            <person name="Forbes S."/>
            <person name="Gray K."/>
            <person name="Halliday K."/>
            <person name="Harrison R."/>
            <person name="Hills K."/>
            <person name="Hinton J."/>
            <person name="Jenkinson A."/>
            <person name="Jones D."/>
            <person name="Menzies A."/>
            <person name="Mironenko T."/>
            <person name="Perry J."/>
            <person name="Raine K."/>
            <person name="Richardson D."/>
            <person name="Shepherd R."/>
            <person name="Small A."/>
            <person name="Tofts C."/>
            <person name="Varian J."/>
            <person name="Webb T."/>
            <person name="West S."/>
            <person name="Widaa S."/>
            <person name="Yates A."/>
            <person name="Cahill D.P."/>
            <person name="Louis D.N."/>
            <person name="Goldstraw P."/>
            <person name="Nicholson A.G."/>
            <person name="Brasseur F."/>
            <person name="Looijenga L."/>
            <person name="Weber B.L."/>
            <person name="Chiew Y.-E."/>
            <person name="DeFazio A."/>
            <person name="Greaves M.F."/>
            <person name="Green A.R."/>
            <person name="Campbell P."/>
            <person name="Birney E."/>
            <person name="Easton D.F."/>
            <person name="Chenevix-Trench G."/>
            <person name="Tan M.-H."/>
            <person name="Khoo S.K."/>
            <person name="Teh B.T."/>
            <person name="Yuen S.T."/>
            <person name="Leung S.Y."/>
            <person name="Wooster R."/>
            <person name="Futreal P.A."/>
            <person name="Stratton M.R."/>
        </authorList>
    </citation>
    <scope>VARIANTS [LARGE SCALE ANALYSIS] VAL-138; LYS-170; ARG-232; SER-278 AND SER-903</scope>
</reference>
<accession>Q15375</accession>
<accession>A0AUX7</accession>
<accession>B2R8W1</accession>
<accession>B7ZLJ9</accession>
<accession>B7ZLK0</accession>
<accession>Q59G40</accession>
<accession>Q5VTU0</accession>
<accession>Q8N368</accession>
<accession>Q9H124</accession>
<organism>
    <name type="scientific">Homo sapiens</name>
    <name type="common">Human</name>
    <dbReference type="NCBI Taxonomy" id="9606"/>
    <lineage>
        <taxon>Eukaryota</taxon>
        <taxon>Metazoa</taxon>
        <taxon>Chordata</taxon>
        <taxon>Craniata</taxon>
        <taxon>Vertebrata</taxon>
        <taxon>Euteleostomi</taxon>
        <taxon>Mammalia</taxon>
        <taxon>Eutheria</taxon>
        <taxon>Euarchontoglires</taxon>
        <taxon>Primates</taxon>
        <taxon>Haplorrhini</taxon>
        <taxon>Catarrhini</taxon>
        <taxon>Hominidae</taxon>
        <taxon>Homo</taxon>
    </lineage>
</organism>
<keyword id="KW-0002">3D-structure</keyword>
<keyword id="KW-0025">Alternative splicing</keyword>
<keyword id="KW-0053">Apoptosis</keyword>
<keyword id="KW-0067">ATP-binding</keyword>
<keyword id="KW-1003">Cell membrane</keyword>
<keyword id="KW-0217">Developmental protein</keyword>
<keyword id="KW-0325">Glycoprotein</keyword>
<keyword id="KW-0418">Kinase</keyword>
<keyword id="KW-0472">Membrane</keyword>
<keyword id="KW-0524">Neurogenesis</keyword>
<keyword id="KW-0547">Nucleotide-binding</keyword>
<keyword id="KW-0597">Phosphoprotein</keyword>
<keyword id="KW-1267">Proteomics identification</keyword>
<keyword id="KW-0675">Receptor</keyword>
<keyword id="KW-1185">Reference proteome</keyword>
<keyword id="KW-0677">Repeat</keyword>
<keyword id="KW-0732">Signal</keyword>
<keyword id="KW-0808">Transferase</keyword>
<keyword id="KW-0812">Transmembrane</keyword>
<keyword id="KW-1133">Transmembrane helix</keyword>
<keyword id="KW-0829">Tyrosine-protein kinase</keyword>
<comment type="function">
    <text evidence="11">Receptor tyrosine kinase which binds promiscuously GPI-anchored ephrin-A family ligands residing on adjacent cells, leading to contact-dependent bidirectional signaling into neighboring cells. The signaling pathway downstream of the receptor is referred to as forward signaling while the signaling pathway downstream of the ephrin ligand is referred to as reverse signaling. Among GPI-anchored ephrin-A ligands, EFNA5 is a cognate/functional ligand for EPHA7 and their interaction regulates brain development modulating cell-cell adhesion and repulsion. Has a repellent activity on axons and is for instance involved in the guidance of corticothalamic axons and in the proper topographic mapping of retinal axons to the colliculus. May also regulate brain development through a caspase(CASP3)-dependent proapoptotic activity. Forward signaling may result in activation of components of the ERK signaling pathway including MAP2K1, MAP2K2, MAPK1 and MAPK3 which are phosphorylated upon activation of EPHA7.</text>
</comment>
<comment type="catalytic activity">
    <reaction evidence="7">
        <text>L-tyrosyl-[protein] + ATP = O-phospho-L-tyrosyl-[protein] + ADP + H(+)</text>
        <dbReference type="Rhea" id="RHEA:10596"/>
        <dbReference type="Rhea" id="RHEA-COMP:10136"/>
        <dbReference type="Rhea" id="RHEA-COMP:20101"/>
        <dbReference type="ChEBI" id="CHEBI:15378"/>
        <dbReference type="ChEBI" id="CHEBI:30616"/>
        <dbReference type="ChEBI" id="CHEBI:46858"/>
        <dbReference type="ChEBI" id="CHEBI:61978"/>
        <dbReference type="ChEBI" id="CHEBI:456216"/>
        <dbReference type="EC" id="2.7.10.1"/>
    </reaction>
</comment>
<comment type="subunit">
    <text evidence="1">Heterotetramer upon binding of the ligand. The heterotetramer is composed of an ephrin dimer and a receptor dimer. Oligomerization is probably required to induce biological responses (By similarity). Interacts (via PDZ-binding motif) with GRIP1 and PICK1 (via PDZ domain) (By similarity).</text>
</comment>
<comment type="interaction">
    <interactant intactId="EBI-1383428">
        <id>Q15375</id>
    </interactant>
    <interactant intactId="EBI-2835440">
        <id>P07333</id>
        <label>CSF1R</label>
    </interactant>
    <organismsDiffer>false</organismsDiffer>
    <experiments>2</experiments>
</comment>
<comment type="interaction">
    <interactant intactId="EBI-1383428">
        <id>Q15375</id>
    </interactant>
    <interactant intactId="EBI-1753674">
        <id>P52803</id>
        <label>EFNA5</label>
    </interactant>
    <organismsDiffer>false</organismsDiffer>
    <experiments>4</experiments>
</comment>
<comment type="interaction">
    <interactant intactId="EBI-1383428">
        <id>Q15375</id>
    </interactant>
    <interactant intactId="EBI-702104">
        <id>P29317</id>
        <label>EPHA2</label>
    </interactant>
    <organismsDiffer>false</organismsDiffer>
    <experiments>7</experiments>
</comment>
<comment type="interaction">
    <interactant intactId="EBI-1383428">
        <id>Q15375</id>
    </interactant>
    <interactant intactId="EBI-1641575">
        <id>P29320</id>
        <label>EPHA3</label>
    </interactant>
    <organismsDiffer>false</organismsDiffer>
    <experiments>4</experiments>
</comment>
<comment type="interaction">
    <interactant intactId="EBI-1383428">
        <id>Q15375</id>
    </interactant>
    <interactant intactId="EBI-1059294">
        <id>P29323</id>
        <label>EPHB2</label>
    </interactant>
    <organismsDiffer>false</organismsDiffer>
    <experiments>2</experiments>
</comment>
<comment type="interaction">
    <interactant intactId="EBI-1383428">
        <id>Q15375</id>
    </interactant>
    <interactant intactId="EBI-702121">
        <id>P54760</id>
        <label>EPHB4</label>
    </interactant>
    <organismsDiffer>false</organismsDiffer>
    <experiments>3</experiments>
</comment>
<comment type="interaction">
    <interactant intactId="EBI-1383428">
        <id>Q15375</id>
    </interactant>
    <interactant intactId="EBI-3936704">
        <id>Q16288</id>
        <label>NTRK3</label>
    </interactant>
    <organismsDiffer>false</organismsDiffer>
    <experiments>2</experiments>
</comment>
<comment type="interaction">
    <interactant intactId="EBI-1383428">
        <id>Q15375</id>
    </interactant>
    <interactant intactId="EBI-5241529">
        <id>P52793</id>
        <label>Efna1</label>
    </interactant>
    <organismsDiffer>true</organismsDiffer>
    <experiments>2</experiments>
</comment>
<comment type="subcellular location">
    <subcellularLocation>
        <location evidence="15">Cell membrane</location>
        <topology evidence="15">Single-pass type I membrane protein</topology>
    </subcellularLocation>
</comment>
<comment type="alternative products">
    <event type="alternative splicing"/>
    <isoform>
        <id>Q15375-1</id>
        <name>1</name>
        <name>EPHA7-FL</name>
        <sequence type="displayed"/>
    </isoform>
    <isoform>
        <id>Q15375-2</id>
        <name>2</name>
        <sequence type="described" ref="VSP_014382"/>
    </isoform>
    <isoform>
        <id>Q15375-3</id>
        <name>3</name>
        <sequence type="described" ref="VSP_014380 VSP_014381"/>
    </isoform>
    <isoform>
        <id>Q15375-4</id>
        <name>4</name>
        <sequence type="described" ref="VSP_041945"/>
    </isoform>
    <isoform>
        <id>Q15375-5</id>
        <name>5</name>
        <name>EPHA7-S</name>
        <sequence type="described" ref="VSP_041943 VSP_041944"/>
    </isoform>
</comment>
<comment type="tissue specificity">
    <text>Widely expressed.</text>
</comment>
<comment type="PTM">
    <text evidence="1">Phosphorylated.</text>
</comment>
<comment type="miscellaneous">
    <molecule>Isoform 2</molecule>
    <text evidence="15">May be due to a competing donor splice site.</text>
</comment>
<comment type="miscellaneous">
    <molecule>Isoform 5</molecule>
    <text evidence="15">Expressed in lung cancer cells, lacks the kinase domain and is most probably secreted.</text>
</comment>
<comment type="similarity">
    <text evidence="3">Belongs to the protein kinase superfamily. Tyr protein kinase family. Ephrin receptor subfamily.</text>
</comment>
<comment type="sequence caution" evidence="15">
    <conflict type="erroneous initiation">
        <sequence resource="EMBL-CDS" id="BAD92506"/>
    </conflict>
    <text>Extended N-terminus.</text>
</comment>
<comment type="online information" name="Atlas of Genetics and Cytogenetics in Oncology and Haematology">
    <link uri="https://atlasgeneticsoncology.org/gene/40466/EPHA7"/>
</comment>
<gene>
    <name type="primary">EPHA7</name>
    <name type="synonym">EHK3</name>
    <name type="synonym">HEK11</name>
</gene>
<proteinExistence type="evidence at protein level"/>